<feature type="chain" id="PRO_1000081000" description="Phosphoenolpyruvate carboxykinase (ATP)">
    <location>
        <begin position="1"/>
        <end position="539"/>
    </location>
</feature>
<feature type="binding site" evidence="1">
    <location>
        <position position="64"/>
    </location>
    <ligand>
        <name>substrate</name>
    </ligand>
</feature>
<feature type="binding site" evidence="1">
    <location>
        <position position="206"/>
    </location>
    <ligand>
        <name>substrate</name>
    </ligand>
</feature>
<feature type="binding site" evidence="1">
    <location>
        <position position="212"/>
    </location>
    <ligand>
        <name>ATP</name>
        <dbReference type="ChEBI" id="CHEBI:30616"/>
    </ligand>
</feature>
<feature type="binding site" evidence="1">
    <location>
        <position position="212"/>
    </location>
    <ligand>
        <name>Mn(2+)</name>
        <dbReference type="ChEBI" id="CHEBI:29035"/>
    </ligand>
</feature>
<feature type="binding site" evidence="1">
    <location>
        <position position="212"/>
    </location>
    <ligand>
        <name>substrate</name>
    </ligand>
</feature>
<feature type="binding site" evidence="1">
    <location>
        <position position="231"/>
    </location>
    <ligand>
        <name>ATP</name>
        <dbReference type="ChEBI" id="CHEBI:30616"/>
    </ligand>
</feature>
<feature type="binding site" evidence="1">
    <location>
        <position position="231"/>
    </location>
    <ligand>
        <name>Mn(2+)</name>
        <dbReference type="ChEBI" id="CHEBI:29035"/>
    </ligand>
</feature>
<feature type="binding site" evidence="1">
    <location>
        <begin position="247"/>
        <end position="255"/>
    </location>
    <ligand>
        <name>ATP</name>
        <dbReference type="ChEBI" id="CHEBI:30616"/>
    </ligand>
</feature>
<feature type="binding site" evidence="1">
    <location>
        <position position="268"/>
    </location>
    <ligand>
        <name>Mn(2+)</name>
        <dbReference type="ChEBI" id="CHEBI:29035"/>
    </ligand>
</feature>
<feature type="binding site" evidence="1">
    <location>
        <position position="296"/>
    </location>
    <ligand>
        <name>ATP</name>
        <dbReference type="ChEBI" id="CHEBI:30616"/>
    </ligand>
</feature>
<feature type="binding site" evidence="1">
    <location>
        <position position="332"/>
    </location>
    <ligand>
        <name>ATP</name>
        <dbReference type="ChEBI" id="CHEBI:30616"/>
    </ligand>
</feature>
<feature type="binding site" evidence="1">
    <location>
        <position position="332"/>
    </location>
    <ligand>
        <name>substrate</name>
    </ligand>
</feature>
<feature type="binding site" evidence="1">
    <location>
        <begin position="448"/>
        <end position="449"/>
    </location>
    <ligand>
        <name>ATP</name>
        <dbReference type="ChEBI" id="CHEBI:30616"/>
    </ligand>
</feature>
<feature type="binding site" evidence="1">
    <location>
        <position position="454"/>
    </location>
    <ligand>
        <name>ATP</name>
        <dbReference type="ChEBI" id="CHEBI:30616"/>
    </ligand>
</feature>
<protein>
    <recommendedName>
        <fullName evidence="1">Phosphoenolpyruvate carboxykinase (ATP)</fullName>
        <shortName evidence="1">PCK</shortName>
        <shortName evidence="1">PEP carboxykinase</shortName>
        <shortName evidence="1">PEPCK</shortName>
        <ecNumber evidence="1">4.1.1.49</ecNumber>
    </recommendedName>
</protein>
<proteinExistence type="inferred from homology"/>
<keyword id="KW-0067">ATP-binding</keyword>
<keyword id="KW-0963">Cytoplasm</keyword>
<keyword id="KW-0210">Decarboxylase</keyword>
<keyword id="KW-0312">Gluconeogenesis</keyword>
<keyword id="KW-0456">Lyase</keyword>
<keyword id="KW-0464">Manganese</keyword>
<keyword id="KW-0479">Metal-binding</keyword>
<keyword id="KW-0547">Nucleotide-binding</keyword>
<name>PCKA_SALPB</name>
<gene>
    <name evidence="1" type="primary">pckA</name>
    <name type="ordered locus">SPAB_04356</name>
</gene>
<sequence length="539" mass="59647">MRVNNLTPQDLKAYGINDVQDIVYNPSYDTLYQEELNPGLEGYERGVLTNLGAVAVDTGIFTGRSPKDKYIVRDDTTRDTLWWSDKGKGKNDNKPLSQETWQHLKGLVTHQLSGKRLFIVDAFCGANADTRLSVRFITEVAWQAHFVKNMFIRPTDEELVGFKPDFIVMNGAKCTNPQWKEQGLNSENFVAFNLTERIQLIGGTWYGGEMKKGMFSVMNYLLPLKGIASMHCSANVGEKGDVAVFFGLSGTGKTTLSTDPKRRLIGDDEHGWDDDGVFNFEGGCYAKTIKLSKEAEPEIYHAIRRDALLENVTVREDGTVDFDDGSKTENTRVSYPIYHIDNIVKPVSKAGHATKVIFLTADAFGVLPPVSRLTANQTQYHFLSGFTAKLAGTERGVTEPTPTFSACFGAAFLTLHPTQYAEVLVKRMQAAGAQAYLVNTGWNGTGKRISIKDTRAIIDAILNGSLDNAETFRLPLFDLAIPTELPGVDTHILDPRNTYASPEQWQEKATALAKLFIENFEKYTDTPAGEALVSAGPKL</sequence>
<accession>A9MT72</accession>
<evidence type="ECO:0000255" key="1">
    <source>
        <dbReference type="HAMAP-Rule" id="MF_00453"/>
    </source>
</evidence>
<reference key="1">
    <citation type="submission" date="2007-11" db="EMBL/GenBank/DDBJ databases">
        <authorList>
            <consortium name="The Salmonella enterica serovar Paratyphi B Genome Sequencing Project"/>
            <person name="McClelland M."/>
            <person name="Sanderson E.K."/>
            <person name="Porwollik S."/>
            <person name="Spieth J."/>
            <person name="Clifton W.S."/>
            <person name="Fulton R."/>
            <person name="Cordes M."/>
            <person name="Wollam A."/>
            <person name="Shah N."/>
            <person name="Pepin K."/>
            <person name="Bhonagiri V."/>
            <person name="Nash W."/>
            <person name="Johnson M."/>
            <person name="Thiruvilangam P."/>
            <person name="Wilson R."/>
        </authorList>
    </citation>
    <scope>NUCLEOTIDE SEQUENCE [LARGE SCALE GENOMIC DNA]</scope>
    <source>
        <strain>ATCC BAA-1250 / SPB7</strain>
    </source>
</reference>
<comment type="function">
    <text evidence="1">Involved in the gluconeogenesis. Catalyzes the conversion of oxaloacetate (OAA) to phosphoenolpyruvate (PEP) through direct phosphoryl transfer between the nucleoside triphosphate and OAA.</text>
</comment>
<comment type="catalytic activity">
    <reaction evidence="1">
        <text>oxaloacetate + ATP = phosphoenolpyruvate + ADP + CO2</text>
        <dbReference type="Rhea" id="RHEA:18617"/>
        <dbReference type="ChEBI" id="CHEBI:16452"/>
        <dbReference type="ChEBI" id="CHEBI:16526"/>
        <dbReference type="ChEBI" id="CHEBI:30616"/>
        <dbReference type="ChEBI" id="CHEBI:58702"/>
        <dbReference type="ChEBI" id="CHEBI:456216"/>
        <dbReference type="EC" id="4.1.1.49"/>
    </reaction>
</comment>
<comment type="cofactor">
    <cofactor evidence="1">
        <name>Mn(2+)</name>
        <dbReference type="ChEBI" id="CHEBI:29035"/>
    </cofactor>
    <text evidence="1">Binds 1 Mn(2+) ion per subunit.</text>
</comment>
<comment type="pathway">
    <text evidence="1">Carbohydrate biosynthesis; gluconeogenesis.</text>
</comment>
<comment type="subunit">
    <text evidence="1">Monomer.</text>
</comment>
<comment type="subcellular location">
    <subcellularLocation>
        <location evidence="1">Cytoplasm</location>
    </subcellularLocation>
</comment>
<comment type="similarity">
    <text evidence="1">Belongs to the phosphoenolpyruvate carboxykinase (ATP) family.</text>
</comment>
<organism>
    <name type="scientific">Salmonella paratyphi B (strain ATCC BAA-1250 / SPB7)</name>
    <dbReference type="NCBI Taxonomy" id="1016998"/>
    <lineage>
        <taxon>Bacteria</taxon>
        <taxon>Pseudomonadati</taxon>
        <taxon>Pseudomonadota</taxon>
        <taxon>Gammaproteobacteria</taxon>
        <taxon>Enterobacterales</taxon>
        <taxon>Enterobacteriaceae</taxon>
        <taxon>Salmonella</taxon>
    </lineage>
</organism>
<dbReference type="EC" id="4.1.1.49" evidence="1"/>
<dbReference type="EMBL" id="CP000886">
    <property type="protein sequence ID" value="ABX69672.1"/>
    <property type="molecule type" value="Genomic_DNA"/>
</dbReference>
<dbReference type="RefSeq" id="WP_001265689.1">
    <property type="nucleotide sequence ID" value="NC_010102.1"/>
</dbReference>
<dbReference type="SMR" id="A9MT72"/>
<dbReference type="KEGG" id="spq:SPAB_04356"/>
<dbReference type="PATRIC" id="fig|1016998.12.peg.4100"/>
<dbReference type="HOGENOM" id="CLU_018247_0_1_6"/>
<dbReference type="BioCyc" id="SENT1016998:SPAB_RS17730-MONOMER"/>
<dbReference type="UniPathway" id="UPA00138"/>
<dbReference type="Proteomes" id="UP000008556">
    <property type="component" value="Chromosome"/>
</dbReference>
<dbReference type="GO" id="GO:0005829">
    <property type="term" value="C:cytosol"/>
    <property type="evidence" value="ECO:0007669"/>
    <property type="project" value="TreeGrafter"/>
</dbReference>
<dbReference type="GO" id="GO:0005524">
    <property type="term" value="F:ATP binding"/>
    <property type="evidence" value="ECO:0007669"/>
    <property type="project" value="UniProtKB-UniRule"/>
</dbReference>
<dbReference type="GO" id="GO:0046872">
    <property type="term" value="F:metal ion binding"/>
    <property type="evidence" value="ECO:0007669"/>
    <property type="project" value="UniProtKB-KW"/>
</dbReference>
<dbReference type="GO" id="GO:0004612">
    <property type="term" value="F:phosphoenolpyruvate carboxykinase (ATP) activity"/>
    <property type="evidence" value="ECO:0007669"/>
    <property type="project" value="UniProtKB-UniRule"/>
</dbReference>
<dbReference type="GO" id="GO:0006094">
    <property type="term" value="P:gluconeogenesis"/>
    <property type="evidence" value="ECO:0007669"/>
    <property type="project" value="UniProtKB-UniRule"/>
</dbReference>
<dbReference type="CDD" id="cd00484">
    <property type="entry name" value="PEPCK_ATP"/>
    <property type="match status" value="1"/>
</dbReference>
<dbReference type="FunFam" id="2.170.8.10:FF:000001">
    <property type="entry name" value="Phosphoenolpyruvate carboxykinase (ATP)"/>
    <property type="match status" value="1"/>
</dbReference>
<dbReference type="FunFam" id="3.40.449.10:FF:000001">
    <property type="entry name" value="Phosphoenolpyruvate carboxykinase (ATP)"/>
    <property type="match status" value="1"/>
</dbReference>
<dbReference type="Gene3D" id="3.90.228.20">
    <property type="match status" value="1"/>
</dbReference>
<dbReference type="Gene3D" id="3.40.449.10">
    <property type="entry name" value="Phosphoenolpyruvate Carboxykinase, domain 1"/>
    <property type="match status" value="1"/>
</dbReference>
<dbReference type="Gene3D" id="2.170.8.10">
    <property type="entry name" value="Phosphoenolpyruvate Carboxykinase, domain 2"/>
    <property type="match status" value="1"/>
</dbReference>
<dbReference type="HAMAP" id="MF_00453">
    <property type="entry name" value="PEPCK_ATP"/>
    <property type="match status" value="1"/>
</dbReference>
<dbReference type="InterPro" id="IPR001272">
    <property type="entry name" value="PEP_carboxykinase_ATP"/>
</dbReference>
<dbReference type="InterPro" id="IPR013035">
    <property type="entry name" value="PEP_carboxykinase_C"/>
</dbReference>
<dbReference type="InterPro" id="IPR008210">
    <property type="entry name" value="PEP_carboxykinase_N"/>
</dbReference>
<dbReference type="InterPro" id="IPR015994">
    <property type="entry name" value="PEPCK_ATP_CS"/>
</dbReference>
<dbReference type="NCBIfam" id="TIGR00224">
    <property type="entry name" value="pckA"/>
    <property type="match status" value="1"/>
</dbReference>
<dbReference type="NCBIfam" id="NF006819">
    <property type="entry name" value="PRK09344.1-1"/>
    <property type="match status" value="1"/>
</dbReference>
<dbReference type="NCBIfam" id="NF006820">
    <property type="entry name" value="PRK09344.1-2"/>
    <property type="match status" value="1"/>
</dbReference>
<dbReference type="NCBIfam" id="NF006821">
    <property type="entry name" value="PRK09344.1-3"/>
    <property type="match status" value="1"/>
</dbReference>
<dbReference type="PANTHER" id="PTHR30031:SF0">
    <property type="entry name" value="PHOSPHOENOLPYRUVATE CARBOXYKINASE (ATP)"/>
    <property type="match status" value="1"/>
</dbReference>
<dbReference type="PANTHER" id="PTHR30031">
    <property type="entry name" value="PHOSPHOENOLPYRUVATE CARBOXYKINASE ATP"/>
    <property type="match status" value="1"/>
</dbReference>
<dbReference type="Pfam" id="PF01293">
    <property type="entry name" value="PEPCK_ATP"/>
    <property type="match status" value="1"/>
</dbReference>
<dbReference type="PIRSF" id="PIRSF006294">
    <property type="entry name" value="PEP_crbxkin"/>
    <property type="match status" value="1"/>
</dbReference>
<dbReference type="SUPFAM" id="SSF68923">
    <property type="entry name" value="PEP carboxykinase N-terminal domain"/>
    <property type="match status" value="1"/>
</dbReference>
<dbReference type="SUPFAM" id="SSF53795">
    <property type="entry name" value="PEP carboxykinase-like"/>
    <property type="match status" value="1"/>
</dbReference>
<dbReference type="PROSITE" id="PS00532">
    <property type="entry name" value="PEPCK_ATP"/>
    <property type="match status" value="1"/>
</dbReference>